<evidence type="ECO:0000255" key="1">
    <source>
        <dbReference type="HAMAP-Rule" id="MF_01842"/>
    </source>
</evidence>
<sequence length="173" mass="19363">MRVDIVPVGDVPAHVKRQASSSLRSVYDCEVVVASEQDVPTAAYDEARSQYRAAEFIDTATRATSGDKTIAITPHDLFYRRRNYVFGLAYLDGRGCVVSTYRLQTSSDGGFSNRSSSDVFDDRVRKEVVHELGHTLGLEHCDNNRCAMNFSPTVREVDRKEENLCGSCQRTVF</sequence>
<proteinExistence type="inferred from homology"/>
<protein>
    <recommendedName>
        <fullName evidence="1">Archaemetzincin</fullName>
        <ecNumber evidence="1">3.4.-.-</ecNumber>
    </recommendedName>
</protein>
<gene>
    <name evidence="1" type="primary">amzA</name>
    <name type="ordered locus">OE_4663F</name>
</gene>
<accession>B0R889</accession>
<feature type="chain" id="PRO_1000188422" description="Archaemetzincin">
    <location>
        <begin position="1"/>
        <end position="173"/>
    </location>
</feature>
<feature type="active site" description="Proton acceptor" evidence="1">
    <location>
        <position position="131"/>
    </location>
</feature>
<feature type="binding site" evidence="1">
    <location>
        <position position="130"/>
    </location>
    <ligand>
        <name>Zn(2+)</name>
        <dbReference type="ChEBI" id="CHEBI:29105"/>
        <label>1</label>
        <note>catalytic</note>
    </ligand>
</feature>
<feature type="binding site" evidence="1">
    <location>
        <position position="134"/>
    </location>
    <ligand>
        <name>Zn(2+)</name>
        <dbReference type="ChEBI" id="CHEBI:29105"/>
        <label>1</label>
        <note>catalytic</note>
    </ligand>
</feature>
<feature type="binding site" evidence="1">
    <location>
        <position position="140"/>
    </location>
    <ligand>
        <name>Zn(2+)</name>
        <dbReference type="ChEBI" id="CHEBI:29105"/>
        <label>1</label>
        <note>catalytic</note>
    </ligand>
</feature>
<feature type="binding site" evidence="1">
    <location>
        <position position="141"/>
    </location>
    <ligand>
        <name>Zn(2+)</name>
        <dbReference type="ChEBI" id="CHEBI:29105"/>
        <label>2</label>
    </ligand>
</feature>
<feature type="binding site" evidence="1">
    <location>
        <position position="146"/>
    </location>
    <ligand>
        <name>Zn(2+)</name>
        <dbReference type="ChEBI" id="CHEBI:29105"/>
        <label>2</label>
    </ligand>
</feature>
<feature type="binding site" evidence="1">
    <location>
        <position position="165"/>
    </location>
    <ligand>
        <name>Zn(2+)</name>
        <dbReference type="ChEBI" id="CHEBI:29105"/>
        <label>2</label>
    </ligand>
</feature>
<feature type="binding site" evidence="1">
    <location>
        <position position="168"/>
    </location>
    <ligand>
        <name>Zn(2+)</name>
        <dbReference type="ChEBI" id="CHEBI:29105"/>
        <label>2</label>
    </ligand>
</feature>
<organism>
    <name type="scientific">Halobacterium salinarum (strain ATCC 29341 / DSM 671 / R1)</name>
    <dbReference type="NCBI Taxonomy" id="478009"/>
    <lineage>
        <taxon>Archaea</taxon>
        <taxon>Methanobacteriati</taxon>
        <taxon>Methanobacteriota</taxon>
        <taxon>Stenosarchaea group</taxon>
        <taxon>Halobacteria</taxon>
        <taxon>Halobacteriales</taxon>
        <taxon>Halobacteriaceae</taxon>
        <taxon>Halobacterium</taxon>
        <taxon>Halobacterium salinarum NRC-34001</taxon>
    </lineage>
</organism>
<comment type="function">
    <text evidence="1">Probable zinc metalloprotease whose natural substrate is unknown.</text>
</comment>
<comment type="cofactor">
    <cofactor evidence="1">
        <name>Zn(2+)</name>
        <dbReference type="ChEBI" id="CHEBI:29105"/>
    </cofactor>
    <text evidence="1">Binds 2 Zn(2+) ions per subunit. One is catalytic, whereas the other seems to have a structural role.</text>
</comment>
<comment type="subunit">
    <text evidence="1">Monomer.</text>
</comment>
<comment type="similarity">
    <text evidence="1">Belongs to the peptidase M54 family.</text>
</comment>
<name>AMZA_HALS3</name>
<keyword id="KW-0378">Hydrolase</keyword>
<keyword id="KW-0479">Metal-binding</keyword>
<keyword id="KW-0482">Metalloprotease</keyword>
<keyword id="KW-0645">Protease</keyword>
<keyword id="KW-0862">Zinc</keyword>
<reference key="1">
    <citation type="journal article" date="2008" name="Genomics">
        <title>Evolution in the laboratory: the genome of Halobacterium salinarum strain R1 compared to that of strain NRC-1.</title>
        <authorList>
            <person name="Pfeiffer F."/>
            <person name="Schuster S.C."/>
            <person name="Broicher A."/>
            <person name="Falb M."/>
            <person name="Palm P."/>
            <person name="Rodewald K."/>
            <person name="Ruepp A."/>
            <person name="Soppa J."/>
            <person name="Tittor J."/>
            <person name="Oesterhelt D."/>
        </authorList>
    </citation>
    <scope>NUCLEOTIDE SEQUENCE [LARGE SCALE GENOMIC DNA]</scope>
    <source>
        <strain>ATCC 29341 / DSM 671 / R1</strain>
    </source>
</reference>
<dbReference type="EC" id="3.4.-.-" evidence="1"/>
<dbReference type="EMBL" id="AM774415">
    <property type="protein sequence ID" value="CAP14958.1"/>
    <property type="molecule type" value="Genomic_DNA"/>
</dbReference>
<dbReference type="RefSeq" id="WP_010903951.1">
    <property type="nucleotide sequence ID" value="NC_010364.1"/>
</dbReference>
<dbReference type="SMR" id="B0R889"/>
<dbReference type="EnsemblBacteria" id="CAP14958">
    <property type="protein sequence ID" value="CAP14958"/>
    <property type="gene ID" value="OE_4663F"/>
</dbReference>
<dbReference type="KEGG" id="hsl:OE_4663F"/>
<dbReference type="HOGENOM" id="CLU_108521_2_0_2"/>
<dbReference type="PhylomeDB" id="B0R889"/>
<dbReference type="Proteomes" id="UP000001321">
    <property type="component" value="Chromosome"/>
</dbReference>
<dbReference type="GO" id="GO:0008237">
    <property type="term" value="F:metallopeptidase activity"/>
    <property type="evidence" value="ECO:0007669"/>
    <property type="project" value="UniProtKB-UniRule"/>
</dbReference>
<dbReference type="GO" id="GO:0008270">
    <property type="term" value="F:zinc ion binding"/>
    <property type="evidence" value="ECO:0007669"/>
    <property type="project" value="UniProtKB-UniRule"/>
</dbReference>
<dbReference type="GO" id="GO:0006508">
    <property type="term" value="P:proteolysis"/>
    <property type="evidence" value="ECO:0007669"/>
    <property type="project" value="UniProtKB-UniRule"/>
</dbReference>
<dbReference type="CDD" id="cd11375">
    <property type="entry name" value="Peptidase_M54"/>
    <property type="match status" value="1"/>
</dbReference>
<dbReference type="Gene3D" id="3.40.390.10">
    <property type="entry name" value="Collagenase (Catalytic Domain)"/>
    <property type="match status" value="1"/>
</dbReference>
<dbReference type="HAMAP" id="MF_01842">
    <property type="entry name" value="Archaemetzincin"/>
    <property type="match status" value="1"/>
</dbReference>
<dbReference type="InterPro" id="IPR024079">
    <property type="entry name" value="MetalloPept_cat_dom_sf"/>
</dbReference>
<dbReference type="InterPro" id="IPR012962">
    <property type="entry name" value="Pept_M54_archaemetzincn"/>
</dbReference>
<dbReference type="InterPro" id="IPR012091">
    <property type="entry name" value="Pept_M54_archaemetzncn_arc/bac"/>
</dbReference>
<dbReference type="NCBIfam" id="NF033823">
    <property type="entry name" value="archmetzin"/>
    <property type="match status" value="1"/>
</dbReference>
<dbReference type="PANTHER" id="PTHR15910">
    <property type="entry name" value="ARCHAEMETZINCIN"/>
    <property type="match status" value="1"/>
</dbReference>
<dbReference type="PANTHER" id="PTHR15910:SF1">
    <property type="entry name" value="ARCHAEMETZINCIN-2"/>
    <property type="match status" value="1"/>
</dbReference>
<dbReference type="Pfam" id="PF07998">
    <property type="entry name" value="Peptidase_M54"/>
    <property type="match status" value="1"/>
</dbReference>
<dbReference type="PIRSF" id="PIRSF005785">
    <property type="entry name" value="Zn-prot_arch"/>
    <property type="match status" value="1"/>
</dbReference>
<dbReference type="SUPFAM" id="SSF55486">
    <property type="entry name" value="Metalloproteases ('zincins'), catalytic domain"/>
    <property type="match status" value="1"/>
</dbReference>